<organism>
    <name type="scientific">Drosophila pseudoobscura pseudoobscura</name>
    <name type="common">Fruit fly</name>
    <dbReference type="NCBI Taxonomy" id="46245"/>
    <lineage>
        <taxon>Eukaryota</taxon>
        <taxon>Metazoa</taxon>
        <taxon>Ecdysozoa</taxon>
        <taxon>Arthropoda</taxon>
        <taxon>Hexapoda</taxon>
        <taxon>Insecta</taxon>
        <taxon>Pterygota</taxon>
        <taxon>Neoptera</taxon>
        <taxon>Endopterygota</taxon>
        <taxon>Diptera</taxon>
        <taxon>Brachycera</taxon>
        <taxon>Muscomorpha</taxon>
        <taxon>Ephydroidea</taxon>
        <taxon>Drosophilidae</taxon>
        <taxon>Drosophila</taxon>
        <taxon>Sophophora</taxon>
    </lineage>
</organism>
<name>ATX2_DROPS</name>
<evidence type="ECO:0000250" key="1"/>
<evidence type="ECO:0000250" key="2">
    <source>
        <dbReference type="UniProtKB" id="Q8SWR8"/>
    </source>
</evidence>
<evidence type="ECO:0000255" key="3">
    <source>
        <dbReference type="PROSITE-ProRule" id="PRU01346"/>
    </source>
</evidence>
<evidence type="ECO:0000256" key="4">
    <source>
        <dbReference type="SAM" id="MobiDB-lite"/>
    </source>
</evidence>
<evidence type="ECO:0000305" key="5"/>
<comment type="function">
    <text evidence="2">Regulator of actin filament formation, though it does not directly assemble with actin filaments. Required for oocyte specification and oocyte positioning in the female germline. Also required for normal eye development and bristle morphology (By similarity).</text>
</comment>
<comment type="subcellular location">
    <subcellularLocation>
        <location evidence="2">Cytoplasm</location>
    </subcellularLocation>
</comment>
<comment type="similarity">
    <text evidence="5">Belongs to the ataxin-2 family.</text>
</comment>
<proteinExistence type="inferred from homology"/>
<protein>
    <recommendedName>
        <fullName>Ataxin-2 homolog</fullName>
    </recommendedName>
</protein>
<keyword id="KW-0963">Cytoplasm</keyword>
<keyword id="KW-0217">Developmental protein</keyword>
<keyword id="KW-0597">Phosphoprotein</keyword>
<keyword id="KW-1185">Reference proteome</keyword>
<reference key="1">
    <citation type="journal article" date="2005" name="Genome Res.">
        <title>Comparative genome sequencing of Drosophila pseudoobscura: chromosomal, gene, and cis-element evolution.</title>
        <authorList>
            <person name="Richards S."/>
            <person name="Liu Y."/>
            <person name="Bettencourt B.R."/>
            <person name="Hradecky P."/>
            <person name="Letovsky S."/>
            <person name="Nielsen R."/>
            <person name="Thornton K."/>
            <person name="Hubisz M.J."/>
            <person name="Chen R."/>
            <person name="Meisel R.P."/>
            <person name="Couronne O."/>
            <person name="Hua S."/>
            <person name="Smith M.A."/>
            <person name="Zhang P."/>
            <person name="Liu J."/>
            <person name="Bussemaker H.J."/>
            <person name="van Batenburg M.F."/>
            <person name="Howells S.L."/>
            <person name="Scherer S.E."/>
            <person name="Sodergren E."/>
            <person name="Matthews B.B."/>
            <person name="Crosby M.A."/>
            <person name="Schroeder A.J."/>
            <person name="Ortiz-Barrientos D."/>
            <person name="Rives C.M."/>
            <person name="Metzker M.L."/>
            <person name="Muzny D.M."/>
            <person name="Scott G."/>
            <person name="Steffen D."/>
            <person name="Wheeler D.A."/>
            <person name="Worley K.C."/>
            <person name="Havlak P."/>
            <person name="Durbin K.J."/>
            <person name="Egan A."/>
            <person name="Gill R."/>
            <person name="Hume J."/>
            <person name="Morgan M.B."/>
            <person name="Miner G."/>
            <person name="Hamilton C."/>
            <person name="Huang Y."/>
            <person name="Waldron L."/>
            <person name="Verduzco D."/>
            <person name="Clerc-Blankenburg K.P."/>
            <person name="Dubchak I."/>
            <person name="Noor M.A.F."/>
            <person name="Anderson W."/>
            <person name="White K.P."/>
            <person name="Clark A.G."/>
            <person name="Schaeffer S.W."/>
            <person name="Gelbart W.M."/>
            <person name="Weinstock G.M."/>
            <person name="Gibbs R.A."/>
        </authorList>
    </citation>
    <scope>NUCLEOTIDE SEQUENCE [LARGE SCALE GENOMIC DNA]</scope>
    <source>
        <strain>MV2-25 / Tucson 14011-0121.94</strain>
    </source>
</reference>
<feature type="chain" id="PRO_0000311704" description="Ataxin-2 homolog">
    <location>
        <begin position="1"/>
        <end position="1121"/>
    </location>
</feature>
<feature type="domain" description="Sm" evidence="3">
    <location>
        <begin position="71"/>
        <end position="146"/>
    </location>
</feature>
<feature type="region of interest" description="Disordered" evidence="4">
    <location>
        <begin position="1"/>
        <end position="53"/>
    </location>
</feature>
<feature type="region of interest" description="Disordered" evidence="4">
    <location>
        <begin position="270"/>
        <end position="376"/>
    </location>
</feature>
<feature type="region of interest" description="Disordered" evidence="4">
    <location>
        <begin position="422"/>
        <end position="458"/>
    </location>
</feature>
<feature type="region of interest" description="Disordered" evidence="4">
    <location>
        <begin position="476"/>
        <end position="935"/>
    </location>
</feature>
<feature type="region of interest" description="Disordered" evidence="4">
    <location>
        <begin position="1039"/>
        <end position="1076"/>
    </location>
</feature>
<feature type="compositionally biased region" description="Basic residues" evidence="4">
    <location>
        <begin position="1"/>
        <end position="10"/>
    </location>
</feature>
<feature type="compositionally biased region" description="Gly residues" evidence="4">
    <location>
        <begin position="12"/>
        <end position="22"/>
    </location>
</feature>
<feature type="compositionally biased region" description="Polar residues" evidence="4">
    <location>
        <begin position="27"/>
        <end position="36"/>
    </location>
</feature>
<feature type="compositionally biased region" description="Low complexity" evidence="4">
    <location>
        <begin position="37"/>
        <end position="47"/>
    </location>
</feature>
<feature type="compositionally biased region" description="Basic and acidic residues" evidence="4">
    <location>
        <begin position="274"/>
        <end position="310"/>
    </location>
</feature>
<feature type="compositionally biased region" description="Polar residues" evidence="4">
    <location>
        <begin position="323"/>
        <end position="347"/>
    </location>
</feature>
<feature type="compositionally biased region" description="Gly residues" evidence="4">
    <location>
        <begin position="367"/>
        <end position="376"/>
    </location>
</feature>
<feature type="compositionally biased region" description="Gly residues" evidence="4">
    <location>
        <begin position="434"/>
        <end position="448"/>
    </location>
</feature>
<feature type="compositionally biased region" description="Polar residues" evidence="4">
    <location>
        <begin position="476"/>
        <end position="487"/>
    </location>
</feature>
<feature type="compositionally biased region" description="Polar residues" evidence="4">
    <location>
        <begin position="499"/>
        <end position="524"/>
    </location>
</feature>
<feature type="compositionally biased region" description="Low complexity" evidence="4">
    <location>
        <begin position="552"/>
        <end position="596"/>
    </location>
</feature>
<feature type="compositionally biased region" description="Low complexity" evidence="4">
    <location>
        <begin position="623"/>
        <end position="684"/>
    </location>
</feature>
<feature type="compositionally biased region" description="Low complexity" evidence="4">
    <location>
        <begin position="697"/>
        <end position="711"/>
    </location>
</feature>
<feature type="compositionally biased region" description="Low complexity" evidence="4">
    <location>
        <begin position="720"/>
        <end position="773"/>
    </location>
</feature>
<feature type="compositionally biased region" description="Pro residues" evidence="4">
    <location>
        <begin position="774"/>
        <end position="789"/>
    </location>
</feature>
<feature type="compositionally biased region" description="Low complexity" evidence="4">
    <location>
        <begin position="807"/>
        <end position="825"/>
    </location>
</feature>
<feature type="compositionally biased region" description="Low complexity" evidence="4">
    <location>
        <begin position="835"/>
        <end position="890"/>
    </location>
</feature>
<feature type="compositionally biased region" description="Pro residues" evidence="4">
    <location>
        <begin position="914"/>
        <end position="926"/>
    </location>
</feature>
<feature type="compositionally biased region" description="Pro residues" evidence="4">
    <location>
        <begin position="1048"/>
        <end position="1062"/>
    </location>
</feature>
<feature type="modified residue" description="Phosphoserine" evidence="1">
    <location>
        <position position="219"/>
    </location>
</feature>
<feature type="modified residue" description="Phosphoserine" evidence="1">
    <location>
        <position position="232"/>
    </location>
</feature>
<sequence length="1121" mass="120519">MNNNSKRKTRPSGGGGGGGASGGISRYNANDNSLRPANNKSGAAGNSAGAGAGTGGTAIRPVAQGVYNNTFFMHSATALVGSVVEVVLRSGNIYEGVFRTFSGNFDIALELPACIKSKNLPEEGKVPKHIIFPADTVVKIVAKDFDSQYATAGAFKTDEAISDKCNGARLDEKELEPWDSGANGDIDIELDGAANGWDANEMFRKNENTFGVTSTFDDSLATYTIPLDKGDSLEFKEAEAKAEKLAAEIENNPTCRDRLDLENGDEEALFAAVERPEQDHRRDGDRERERNDRDREREERDRDRDRDRGNKPPRGAGDFQLRETMSSDRYITKQTRGPQMSHVSMSSQGGGGGGRDRDNGLMMPGVISGGGAGQGGATQSAAVLLLAGGLKASGPASSANAAGMDASGKYSMVKRKTVTQGGKVMRGNVPPNSSGGGNISAVQGGNGNPVGQSKGGYQPTMVMQNQYAYQGNSQIMHGSSQYRNPSHMSGGPSKLNGDANANTNKPLPQRQIRQYQGSQSNSLNYGGEPQPQMGKPMHSSHGGHPGQNSNSPPLQTGGQPQQQQQQQQQQQQQQAPQQQQHQNMAPQGQQPQPQRQMRSRDNQLQDLRQFGQDFQLAPTNNSPPQQQPQQPQQQQQQQQVQVQVQAQVQQQQQRALLQSASPPQQQSQQQQQQQQQQHVPMQHQGPPPHLHQAALSQPHYVPQPQQQQPQPQQQPPPPQQQQQQQHVPLHLQQKAQQPPQQQQQLVETQHQLVPKQHQQPPAQQQQPQLAPEPSQQPLPLYHPMPPPQTSPVVITSPVLLEAPPPQILTAQQPPQQQQLAATPKPDASPAPGSNTTTPTGIVSTPTTAAASSAGSEKSTPAAASSGATSGTAAAAVGATGATGSTGSTPVVKKHVLNPSAKPFTPRAGAGTPNPSRPHTPQTPVPMPGIYTTTGTHVPAAATNQPIYVVQQQHPFPPPTHPQAGQPPRLRRNNYAPMGASQMHVSATTATGQPLMAAGPMTQFIQYPHAPQQHFQSQGYAPMPMRLYPDQQPQLQFLTQTPQSTTPSPGQPHQPFHPPPQPSPAGGGPQPAYTPPTQQTYQLMCLHSQHVLPNPYFQPQPTPHHAPQNPQYQIVMQQHHAQ</sequence>
<accession>Q29A33</accession>
<dbReference type="EMBL" id="CM000070">
    <property type="protein sequence ID" value="EAL27518.2"/>
    <property type="molecule type" value="Genomic_DNA"/>
</dbReference>
<dbReference type="RefSeq" id="XP_001358379.2">
    <property type="nucleotide sequence ID" value="XM_001358342.4"/>
</dbReference>
<dbReference type="SMR" id="Q29A33"/>
<dbReference type="FunCoup" id="Q29A33">
    <property type="interactions" value="1636"/>
</dbReference>
<dbReference type="STRING" id="46245.Q29A33"/>
<dbReference type="EnsemblMetazoa" id="FBtr0283879">
    <property type="protein sequence ID" value="FBpp0282317"/>
    <property type="gene ID" value="FBgn0078704"/>
</dbReference>
<dbReference type="GeneID" id="4801256"/>
<dbReference type="KEGG" id="dpo:4801256"/>
<dbReference type="CTD" id="41883"/>
<dbReference type="eggNOG" id="KOG2375">
    <property type="taxonomic scope" value="Eukaryota"/>
</dbReference>
<dbReference type="HOGENOM" id="CLU_282884_0_0_1"/>
<dbReference type="InParanoid" id="Q29A33"/>
<dbReference type="OMA" id="MRVYQDQ"/>
<dbReference type="ChiTaRS" id="Atx2">
    <property type="organism name" value="fly"/>
</dbReference>
<dbReference type="Proteomes" id="UP000001819">
    <property type="component" value="Chromosome 2"/>
</dbReference>
<dbReference type="Bgee" id="FBgn0078704">
    <property type="expression patterns" value="Expressed in insect adult head and 2 other cell types or tissues"/>
</dbReference>
<dbReference type="ExpressionAtlas" id="Q29A33">
    <property type="expression patterns" value="baseline"/>
</dbReference>
<dbReference type="GO" id="GO:0005737">
    <property type="term" value="C:cytoplasm"/>
    <property type="evidence" value="ECO:0000250"/>
    <property type="project" value="UniProtKB"/>
</dbReference>
<dbReference type="GO" id="GO:0010494">
    <property type="term" value="C:cytoplasmic stress granule"/>
    <property type="evidence" value="ECO:0007669"/>
    <property type="project" value="TreeGrafter"/>
</dbReference>
<dbReference type="GO" id="GO:0003729">
    <property type="term" value="F:mRNA binding"/>
    <property type="evidence" value="ECO:0007669"/>
    <property type="project" value="TreeGrafter"/>
</dbReference>
<dbReference type="GO" id="GO:0022416">
    <property type="term" value="P:chaeta development"/>
    <property type="evidence" value="ECO:0000250"/>
    <property type="project" value="UniProtKB"/>
</dbReference>
<dbReference type="GO" id="GO:0048749">
    <property type="term" value="P:compound eye development"/>
    <property type="evidence" value="ECO:0000250"/>
    <property type="project" value="UniProtKB"/>
</dbReference>
<dbReference type="GO" id="GO:0009994">
    <property type="term" value="P:oocyte differentiation"/>
    <property type="evidence" value="ECO:0000250"/>
    <property type="project" value="UniProtKB"/>
</dbReference>
<dbReference type="GO" id="GO:0030833">
    <property type="term" value="P:regulation of actin filament polymerization"/>
    <property type="evidence" value="ECO:0000250"/>
    <property type="project" value="UniProtKB"/>
</dbReference>
<dbReference type="GO" id="GO:0034063">
    <property type="term" value="P:stress granule assembly"/>
    <property type="evidence" value="ECO:0007669"/>
    <property type="project" value="TreeGrafter"/>
</dbReference>
<dbReference type="InterPro" id="IPR045117">
    <property type="entry name" value="ATXN2-like"/>
</dbReference>
<dbReference type="InterPro" id="IPR009604">
    <property type="entry name" value="LsmAD_domain"/>
</dbReference>
<dbReference type="InterPro" id="IPR047575">
    <property type="entry name" value="Sm"/>
</dbReference>
<dbReference type="InterPro" id="IPR025852">
    <property type="entry name" value="SM_dom_ATX"/>
</dbReference>
<dbReference type="PANTHER" id="PTHR12854">
    <property type="entry name" value="ATAXIN 2-RELATED"/>
    <property type="match status" value="1"/>
</dbReference>
<dbReference type="PANTHER" id="PTHR12854:SF7">
    <property type="entry name" value="ATAXIN-2 HOMOLOG"/>
    <property type="match status" value="1"/>
</dbReference>
<dbReference type="Pfam" id="PF06741">
    <property type="entry name" value="LsmAD"/>
    <property type="match status" value="1"/>
</dbReference>
<dbReference type="Pfam" id="PF14438">
    <property type="entry name" value="SM-ATX"/>
    <property type="match status" value="1"/>
</dbReference>
<dbReference type="SMART" id="SM01272">
    <property type="entry name" value="LsmAD"/>
    <property type="match status" value="1"/>
</dbReference>
<dbReference type="PROSITE" id="PS52002">
    <property type="entry name" value="SM"/>
    <property type="match status" value="1"/>
</dbReference>
<gene>
    <name evidence="2" type="primary">Atx2</name>
    <name type="ORF">GA18704</name>
</gene>